<proteinExistence type="inferred from homology"/>
<sequence length="197" mass="21856">MSSKEQKTPEGQAPEEIIMDQHEEIEAVEPEASAEQVDPRDEKIANLEAQLAEAQTRERDGILRVKAEMENLRRRTELDIEKAHKFALEKFINELLPVIDSLDRALEVADKANPDMSAMVEGIELTLKSMLDVVRKFGVEVIAETNVPLDPNVHQAIAMVESDDVAPGNVLGIMQKGYTLNGRTIRAAMVTVAKAKD</sequence>
<dbReference type="EMBL" id="CP000243">
    <property type="protein sequence ID" value="ABE08403.1"/>
    <property type="molecule type" value="Genomic_DNA"/>
</dbReference>
<dbReference type="RefSeq" id="WP_001332400.1">
    <property type="nucleotide sequence ID" value="NZ_CP064825.1"/>
</dbReference>
<dbReference type="SMR" id="Q1R8B1"/>
<dbReference type="KEGG" id="eci:UTI89_C2947"/>
<dbReference type="HOGENOM" id="CLU_057217_6_0_6"/>
<dbReference type="Proteomes" id="UP000001952">
    <property type="component" value="Chromosome"/>
</dbReference>
<dbReference type="GO" id="GO:0005829">
    <property type="term" value="C:cytosol"/>
    <property type="evidence" value="ECO:0007669"/>
    <property type="project" value="TreeGrafter"/>
</dbReference>
<dbReference type="GO" id="GO:0000774">
    <property type="term" value="F:adenyl-nucleotide exchange factor activity"/>
    <property type="evidence" value="ECO:0007669"/>
    <property type="project" value="InterPro"/>
</dbReference>
<dbReference type="GO" id="GO:0042803">
    <property type="term" value="F:protein homodimerization activity"/>
    <property type="evidence" value="ECO:0007669"/>
    <property type="project" value="InterPro"/>
</dbReference>
<dbReference type="GO" id="GO:0051087">
    <property type="term" value="F:protein-folding chaperone binding"/>
    <property type="evidence" value="ECO:0007669"/>
    <property type="project" value="InterPro"/>
</dbReference>
<dbReference type="GO" id="GO:0051082">
    <property type="term" value="F:unfolded protein binding"/>
    <property type="evidence" value="ECO:0007669"/>
    <property type="project" value="TreeGrafter"/>
</dbReference>
<dbReference type="GO" id="GO:0006457">
    <property type="term" value="P:protein folding"/>
    <property type="evidence" value="ECO:0007669"/>
    <property type="project" value="InterPro"/>
</dbReference>
<dbReference type="CDD" id="cd00446">
    <property type="entry name" value="GrpE"/>
    <property type="match status" value="1"/>
</dbReference>
<dbReference type="FunFam" id="2.30.22.10:FF:000001">
    <property type="entry name" value="Protein GrpE"/>
    <property type="match status" value="1"/>
</dbReference>
<dbReference type="FunFam" id="3.90.20.20:FF:000001">
    <property type="entry name" value="Protein GrpE"/>
    <property type="match status" value="1"/>
</dbReference>
<dbReference type="Gene3D" id="3.90.20.20">
    <property type="match status" value="1"/>
</dbReference>
<dbReference type="Gene3D" id="2.30.22.10">
    <property type="entry name" value="Head domain of nucleotide exchange factor GrpE"/>
    <property type="match status" value="1"/>
</dbReference>
<dbReference type="HAMAP" id="MF_01151">
    <property type="entry name" value="GrpE"/>
    <property type="match status" value="1"/>
</dbReference>
<dbReference type="InterPro" id="IPR000740">
    <property type="entry name" value="GrpE"/>
</dbReference>
<dbReference type="InterPro" id="IPR013805">
    <property type="entry name" value="GrpE_coiled_coil"/>
</dbReference>
<dbReference type="InterPro" id="IPR009012">
    <property type="entry name" value="GrpE_head"/>
</dbReference>
<dbReference type="NCBIfam" id="NF007655">
    <property type="entry name" value="PRK10325.1"/>
    <property type="match status" value="1"/>
</dbReference>
<dbReference type="NCBIfam" id="NF010738">
    <property type="entry name" value="PRK14140.1"/>
    <property type="match status" value="1"/>
</dbReference>
<dbReference type="NCBIfam" id="NF010748">
    <property type="entry name" value="PRK14150.1"/>
    <property type="match status" value="1"/>
</dbReference>
<dbReference type="PANTHER" id="PTHR21237">
    <property type="entry name" value="GRPE PROTEIN"/>
    <property type="match status" value="1"/>
</dbReference>
<dbReference type="PANTHER" id="PTHR21237:SF23">
    <property type="entry name" value="GRPE PROTEIN HOMOLOG, MITOCHONDRIAL"/>
    <property type="match status" value="1"/>
</dbReference>
<dbReference type="Pfam" id="PF01025">
    <property type="entry name" value="GrpE"/>
    <property type="match status" value="1"/>
</dbReference>
<dbReference type="PRINTS" id="PR00773">
    <property type="entry name" value="GRPEPROTEIN"/>
</dbReference>
<dbReference type="SUPFAM" id="SSF58014">
    <property type="entry name" value="Coiled-coil domain of nucleotide exchange factor GrpE"/>
    <property type="match status" value="1"/>
</dbReference>
<dbReference type="SUPFAM" id="SSF51064">
    <property type="entry name" value="Head domain of nucleotide exchange factor GrpE"/>
    <property type="match status" value="1"/>
</dbReference>
<dbReference type="PROSITE" id="PS01071">
    <property type="entry name" value="GRPE"/>
    <property type="match status" value="1"/>
</dbReference>
<keyword id="KW-0143">Chaperone</keyword>
<keyword id="KW-0963">Cytoplasm</keyword>
<keyword id="KW-0346">Stress response</keyword>
<reference key="1">
    <citation type="journal article" date="2006" name="Proc. Natl. Acad. Sci. U.S.A.">
        <title>Identification of genes subject to positive selection in uropathogenic strains of Escherichia coli: a comparative genomics approach.</title>
        <authorList>
            <person name="Chen S.L."/>
            <person name="Hung C.-S."/>
            <person name="Xu J."/>
            <person name="Reigstad C.S."/>
            <person name="Magrini V."/>
            <person name="Sabo A."/>
            <person name="Blasiar D."/>
            <person name="Bieri T."/>
            <person name="Meyer R.R."/>
            <person name="Ozersky P."/>
            <person name="Armstrong J.R."/>
            <person name="Fulton R.S."/>
            <person name="Latreille J.P."/>
            <person name="Spieth J."/>
            <person name="Hooton T.M."/>
            <person name="Mardis E.R."/>
            <person name="Hultgren S.J."/>
            <person name="Gordon J.I."/>
        </authorList>
    </citation>
    <scope>NUCLEOTIDE SEQUENCE [LARGE SCALE GENOMIC DNA]</scope>
    <source>
        <strain>UTI89 / UPEC</strain>
    </source>
</reference>
<comment type="function">
    <text evidence="1">Participates actively in the response to hyperosmotic and heat shock by preventing the aggregation of stress-denatured proteins, in association with DnaK and GrpE. It is the nucleotide exchange factor for DnaK and may function as a thermosensor. Unfolded proteins bind initially to DnaJ; upon interaction with the DnaJ-bound protein, DnaK hydrolyzes its bound ATP, resulting in the formation of a stable complex. GrpE releases ADP from DnaK; ATP binding to DnaK triggers the release of the substrate protein, thus completing the reaction cycle. Several rounds of ATP-dependent interactions between DnaJ, DnaK and GrpE are required for fully efficient folding.</text>
</comment>
<comment type="subunit">
    <text evidence="1">Homodimer.</text>
</comment>
<comment type="subcellular location">
    <subcellularLocation>
        <location evidence="1">Cytoplasm</location>
    </subcellularLocation>
</comment>
<comment type="similarity">
    <text evidence="1">Belongs to the GrpE family.</text>
</comment>
<accession>Q1R8B1</accession>
<feature type="chain" id="PRO_1000053576" description="Protein GrpE">
    <location>
        <begin position="1"/>
        <end position="197"/>
    </location>
</feature>
<feature type="region of interest" description="Disordered" evidence="2">
    <location>
        <begin position="1"/>
        <end position="39"/>
    </location>
</feature>
<protein>
    <recommendedName>
        <fullName evidence="1">Protein GrpE</fullName>
    </recommendedName>
    <alternativeName>
        <fullName evidence="1">HSP-70 cofactor</fullName>
    </alternativeName>
</protein>
<evidence type="ECO:0000255" key="1">
    <source>
        <dbReference type="HAMAP-Rule" id="MF_01151"/>
    </source>
</evidence>
<evidence type="ECO:0000256" key="2">
    <source>
        <dbReference type="SAM" id="MobiDB-lite"/>
    </source>
</evidence>
<name>GRPE_ECOUT</name>
<organism>
    <name type="scientific">Escherichia coli (strain UTI89 / UPEC)</name>
    <dbReference type="NCBI Taxonomy" id="364106"/>
    <lineage>
        <taxon>Bacteria</taxon>
        <taxon>Pseudomonadati</taxon>
        <taxon>Pseudomonadota</taxon>
        <taxon>Gammaproteobacteria</taxon>
        <taxon>Enterobacterales</taxon>
        <taxon>Enterobacteriaceae</taxon>
        <taxon>Escherichia</taxon>
    </lineage>
</organism>
<gene>
    <name evidence="1" type="primary">grpE</name>
    <name type="ordered locus">UTI89_C2947</name>
</gene>